<name>AROC_DESAP</name>
<accession>B1I3D5</accession>
<gene>
    <name evidence="1" type="primary">aroC</name>
    <name type="ordered locus">Daud_0988</name>
</gene>
<proteinExistence type="inferred from homology"/>
<sequence>MLRYLTAGESHGPALITIVEGLPAGLAVEAGYVDRQLARRQGGYGRGKRMAIEQDRVRILSGVRGGLTLGSPVCLQIENRDWENWSTTMAPGPEADTGDRVVTRPRPGHADLAGVLKYGHKDVRNVLERASARETAARVAAGSLARRLLEELGVEILGLVVRIGPVQARIPEVPLDALRARIAESRVMCPDPYAGLSMVEEIDRARDDGDSLGGVFELHAFGVPPGLGSYVQWDRRLDGRLAGALMSIQAVKGVEIGLGFEGAAQRGSEVQDEIFHNGEKGFYRTSNRAGGIEGGVSNGQPVVVRVAMKPIPTLRRPLASVDLVSLTPSEAAFERSDICAVPAACVIGEAVLAFELARACLEKFGGDSMTELLDNHRRYLERIRANRAGG</sequence>
<organism>
    <name type="scientific">Desulforudis audaxviator (strain MP104C)</name>
    <dbReference type="NCBI Taxonomy" id="477974"/>
    <lineage>
        <taxon>Bacteria</taxon>
        <taxon>Bacillati</taxon>
        <taxon>Bacillota</taxon>
        <taxon>Clostridia</taxon>
        <taxon>Thermoanaerobacterales</taxon>
        <taxon>Candidatus Desulforudaceae</taxon>
        <taxon>Candidatus Desulforudis</taxon>
    </lineage>
</organism>
<protein>
    <recommendedName>
        <fullName evidence="1">Chorismate synthase</fullName>
        <shortName evidence="1">CS</shortName>
        <ecNumber evidence="1">4.2.3.5</ecNumber>
    </recommendedName>
    <alternativeName>
        <fullName evidence="1">5-enolpyruvylshikimate-3-phosphate phospholyase</fullName>
    </alternativeName>
</protein>
<comment type="function">
    <text evidence="1">Catalyzes the anti-1,4-elimination of the C-3 phosphate and the C-6 proR hydrogen from 5-enolpyruvylshikimate-3-phosphate (EPSP) to yield chorismate, which is the branch point compound that serves as the starting substrate for the three terminal pathways of aromatic amino acid biosynthesis. This reaction introduces a second double bond into the aromatic ring system.</text>
</comment>
<comment type="catalytic activity">
    <reaction evidence="1">
        <text>5-O-(1-carboxyvinyl)-3-phosphoshikimate = chorismate + phosphate</text>
        <dbReference type="Rhea" id="RHEA:21020"/>
        <dbReference type="ChEBI" id="CHEBI:29748"/>
        <dbReference type="ChEBI" id="CHEBI:43474"/>
        <dbReference type="ChEBI" id="CHEBI:57701"/>
        <dbReference type="EC" id="4.2.3.5"/>
    </reaction>
</comment>
<comment type="cofactor">
    <cofactor evidence="1">
        <name>FMNH2</name>
        <dbReference type="ChEBI" id="CHEBI:57618"/>
    </cofactor>
    <text evidence="1">Reduced FMN (FMNH(2)).</text>
</comment>
<comment type="pathway">
    <text evidence="1">Metabolic intermediate biosynthesis; chorismate biosynthesis; chorismate from D-erythrose 4-phosphate and phosphoenolpyruvate: step 7/7.</text>
</comment>
<comment type="subunit">
    <text evidence="1">Homotetramer.</text>
</comment>
<comment type="similarity">
    <text evidence="1">Belongs to the chorismate synthase family.</text>
</comment>
<dbReference type="EC" id="4.2.3.5" evidence="1"/>
<dbReference type="EMBL" id="CP000860">
    <property type="protein sequence ID" value="ACA59500.1"/>
    <property type="molecule type" value="Genomic_DNA"/>
</dbReference>
<dbReference type="RefSeq" id="WP_012302086.1">
    <property type="nucleotide sequence ID" value="NC_010424.1"/>
</dbReference>
<dbReference type="SMR" id="B1I3D5"/>
<dbReference type="STRING" id="477974.Daud_0988"/>
<dbReference type="KEGG" id="dau:Daud_0988"/>
<dbReference type="eggNOG" id="COG0082">
    <property type="taxonomic scope" value="Bacteria"/>
</dbReference>
<dbReference type="HOGENOM" id="CLU_034547_2_0_9"/>
<dbReference type="OrthoDB" id="9771806at2"/>
<dbReference type="UniPathway" id="UPA00053">
    <property type="reaction ID" value="UER00090"/>
</dbReference>
<dbReference type="Proteomes" id="UP000008544">
    <property type="component" value="Chromosome"/>
</dbReference>
<dbReference type="GO" id="GO:0005829">
    <property type="term" value="C:cytosol"/>
    <property type="evidence" value="ECO:0007669"/>
    <property type="project" value="TreeGrafter"/>
</dbReference>
<dbReference type="GO" id="GO:0004107">
    <property type="term" value="F:chorismate synthase activity"/>
    <property type="evidence" value="ECO:0007669"/>
    <property type="project" value="UniProtKB-UniRule"/>
</dbReference>
<dbReference type="GO" id="GO:0010181">
    <property type="term" value="F:FMN binding"/>
    <property type="evidence" value="ECO:0007669"/>
    <property type="project" value="TreeGrafter"/>
</dbReference>
<dbReference type="GO" id="GO:0008652">
    <property type="term" value="P:amino acid biosynthetic process"/>
    <property type="evidence" value="ECO:0007669"/>
    <property type="project" value="UniProtKB-KW"/>
</dbReference>
<dbReference type="GO" id="GO:0009073">
    <property type="term" value="P:aromatic amino acid family biosynthetic process"/>
    <property type="evidence" value="ECO:0007669"/>
    <property type="project" value="UniProtKB-KW"/>
</dbReference>
<dbReference type="GO" id="GO:0009423">
    <property type="term" value="P:chorismate biosynthetic process"/>
    <property type="evidence" value="ECO:0007669"/>
    <property type="project" value="UniProtKB-UniRule"/>
</dbReference>
<dbReference type="CDD" id="cd07304">
    <property type="entry name" value="Chorismate_synthase"/>
    <property type="match status" value="1"/>
</dbReference>
<dbReference type="FunFam" id="3.60.150.10:FF:000002">
    <property type="entry name" value="Chorismate synthase"/>
    <property type="match status" value="1"/>
</dbReference>
<dbReference type="Gene3D" id="3.60.150.10">
    <property type="entry name" value="Chorismate synthase AroC"/>
    <property type="match status" value="1"/>
</dbReference>
<dbReference type="HAMAP" id="MF_00300">
    <property type="entry name" value="Chorismate_synth"/>
    <property type="match status" value="1"/>
</dbReference>
<dbReference type="InterPro" id="IPR000453">
    <property type="entry name" value="Chorismate_synth"/>
</dbReference>
<dbReference type="InterPro" id="IPR035904">
    <property type="entry name" value="Chorismate_synth_AroC_sf"/>
</dbReference>
<dbReference type="InterPro" id="IPR020541">
    <property type="entry name" value="Chorismate_synthase_CS"/>
</dbReference>
<dbReference type="NCBIfam" id="TIGR00033">
    <property type="entry name" value="aroC"/>
    <property type="match status" value="1"/>
</dbReference>
<dbReference type="NCBIfam" id="NF003793">
    <property type="entry name" value="PRK05382.1"/>
    <property type="match status" value="1"/>
</dbReference>
<dbReference type="PANTHER" id="PTHR21085">
    <property type="entry name" value="CHORISMATE SYNTHASE"/>
    <property type="match status" value="1"/>
</dbReference>
<dbReference type="PANTHER" id="PTHR21085:SF0">
    <property type="entry name" value="CHORISMATE SYNTHASE"/>
    <property type="match status" value="1"/>
</dbReference>
<dbReference type="Pfam" id="PF01264">
    <property type="entry name" value="Chorismate_synt"/>
    <property type="match status" value="1"/>
</dbReference>
<dbReference type="PIRSF" id="PIRSF001456">
    <property type="entry name" value="Chorismate_synth"/>
    <property type="match status" value="1"/>
</dbReference>
<dbReference type="SUPFAM" id="SSF103263">
    <property type="entry name" value="Chorismate synthase, AroC"/>
    <property type="match status" value="1"/>
</dbReference>
<dbReference type="PROSITE" id="PS00787">
    <property type="entry name" value="CHORISMATE_SYNTHASE_1"/>
    <property type="match status" value="1"/>
</dbReference>
<dbReference type="PROSITE" id="PS00788">
    <property type="entry name" value="CHORISMATE_SYNTHASE_2"/>
    <property type="match status" value="1"/>
</dbReference>
<feature type="chain" id="PRO_1000115346" description="Chorismate synthase">
    <location>
        <begin position="1"/>
        <end position="390"/>
    </location>
</feature>
<feature type="binding site" evidence="1">
    <location>
        <position position="40"/>
    </location>
    <ligand>
        <name>NADP(+)</name>
        <dbReference type="ChEBI" id="CHEBI:58349"/>
    </ligand>
</feature>
<feature type="binding site" evidence="1">
    <location>
        <position position="46"/>
    </location>
    <ligand>
        <name>NADP(+)</name>
        <dbReference type="ChEBI" id="CHEBI:58349"/>
    </ligand>
</feature>
<feature type="binding site" evidence="1">
    <location>
        <begin position="129"/>
        <end position="131"/>
    </location>
    <ligand>
        <name>FMN</name>
        <dbReference type="ChEBI" id="CHEBI:58210"/>
    </ligand>
</feature>
<feature type="binding site" evidence="1">
    <location>
        <begin position="249"/>
        <end position="250"/>
    </location>
    <ligand>
        <name>FMN</name>
        <dbReference type="ChEBI" id="CHEBI:58210"/>
    </ligand>
</feature>
<feature type="binding site" evidence="1">
    <location>
        <position position="294"/>
    </location>
    <ligand>
        <name>FMN</name>
        <dbReference type="ChEBI" id="CHEBI:58210"/>
    </ligand>
</feature>
<feature type="binding site" evidence="1">
    <location>
        <begin position="309"/>
        <end position="313"/>
    </location>
    <ligand>
        <name>FMN</name>
        <dbReference type="ChEBI" id="CHEBI:58210"/>
    </ligand>
</feature>
<feature type="binding site" evidence="1">
    <location>
        <position position="335"/>
    </location>
    <ligand>
        <name>FMN</name>
        <dbReference type="ChEBI" id="CHEBI:58210"/>
    </ligand>
</feature>
<reference key="1">
    <citation type="submission" date="2007-10" db="EMBL/GenBank/DDBJ databases">
        <title>Complete sequence of chromosome of Desulforudis audaxviator MP104C.</title>
        <authorList>
            <person name="Copeland A."/>
            <person name="Lucas S."/>
            <person name="Lapidus A."/>
            <person name="Barry K."/>
            <person name="Glavina del Rio T."/>
            <person name="Dalin E."/>
            <person name="Tice H."/>
            <person name="Bruce D."/>
            <person name="Pitluck S."/>
            <person name="Lowry S.R."/>
            <person name="Larimer F."/>
            <person name="Land M.L."/>
            <person name="Hauser L."/>
            <person name="Kyrpides N."/>
            <person name="Ivanova N.N."/>
            <person name="Richardson P."/>
        </authorList>
    </citation>
    <scope>NUCLEOTIDE SEQUENCE [LARGE SCALE GENOMIC DNA]</scope>
    <source>
        <strain>MP104C</strain>
    </source>
</reference>
<evidence type="ECO:0000255" key="1">
    <source>
        <dbReference type="HAMAP-Rule" id="MF_00300"/>
    </source>
</evidence>
<keyword id="KW-0028">Amino-acid biosynthesis</keyword>
<keyword id="KW-0057">Aromatic amino acid biosynthesis</keyword>
<keyword id="KW-0274">FAD</keyword>
<keyword id="KW-0285">Flavoprotein</keyword>
<keyword id="KW-0288">FMN</keyword>
<keyword id="KW-0456">Lyase</keyword>
<keyword id="KW-0521">NADP</keyword>
<keyword id="KW-1185">Reference proteome</keyword>